<reference key="1">
    <citation type="journal article" date="2005" name="Nucleic Acids Res.">
        <title>Genome dynamics and diversity of Shigella species, the etiologic agents of bacillary dysentery.</title>
        <authorList>
            <person name="Yang F."/>
            <person name="Yang J."/>
            <person name="Zhang X."/>
            <person name="Chen L."/>
            <person name="Jiang Y."/>
            <person name="Yan Y."/>
            <person name="Tang X."/>
            <person name="Wang J."/>
            <person name="Xiong Z."/>
            <person name="Dong J."/>
            <person name="Xue Y."/>
            <person name="Zhu Y."/>
            <person name="Xu X."/>
            <person name="Sun L."/>
            <person name="Chen S."/>
            <person name="Nie H."/>
            <person name="Peng J."/>
            <person name="Xu J."/>
            <person name="Wang Y."/>
            <person name="Yuan Z."/>
            <person name="Wen Y."/>
            <person name="Yao Z."/>
            <person name="Shen Y."/>
            <person name="Qiang B."/>
            <person name="Hou Y."/>
            <person name="Yu J."/>
            <person name="Jin Q."/>
        </authorList>
    </citation>
    <scope>NUCLEOTIDE SEQUENCE [LARGE SCALE GENOMIC DNA]</scope>
    <source>
        <strain>Ss046</strain>
    </source>
</reference>
<evidence type="ECO:0000255" key="1">
    <source>
        <dbReference type="HAMAP-Rule" id="MF_00067"/>
    </source>
</evidence>
<gene>
    <name evidence="1" type="primary">gmhA</name>
    <name type="ordered locus">SSON_0264</name>
</gene>
<comment type="function">
    <text evidence="1">Catalyzes the isomerization of sedoheptulose 7-phosphate in D-glycero-D-manno-heptose 7-phosphate.</text>
</comment>
<comment type="catalytic activity">
    <reaction evidence="1">
        <text>2 D-sedoheptulose 7-phosphate = D-glycero-alpha-D-manno-heptose 7-phosphate + D-glycero-beta-D-manno-heptose 7-phosphate</text>
        <dbReference type="Rhea" id="RHEA:27489"/>
        <dbReference type="ChEBI" id="CHEBI:57483"/>
        <dbReference type="ChEBI" id="CHEBI:60203"/>
        <dbReference type="ChEBI" id="CHEBI:60204"/>
        <dbReference type="EC" id="5.3.1.28"/>
    </reaction>
</comment>
<comment type="cofactor">
    <cofactor evidence="1">
        <name>Zn(2+)</name>
        <dbReference type="ChEBI" id="CHEBI:29105"/>
    </cofactor>
    <text evidence="1">Binds 1 zinc ion per subunit.</text>
</comment>
<comment type="pathway">
    <text evidence="1">Carbohydrate biosynthesis; D-glycero-D-manno-heptose 7-phosphate biosynthesis; D-glycero-alpha-D-manno-heptose 7-phosphate and D-glycero-beta-D-manno-heptose 7-phosphate from sedoheptulose 7-phosphate: step 1/1.</text>
</comment>
<comment type="subunit">
    <text evidence="1">Homotetramer.</text>
</comment>
<comment type="subcellular location">
    <subcellularLocation>
        <location evidence="1">Cytoplasm</location>
    </subcellularLocation>
</comment>
<comment type="miscellaneous">
    <text evidence="1">The reaction produces a racemic mixture of D-glycero-alpha-D-manno-heptose 7-phosphate and D-glycero-beta-D-manno-heptose 7-phosphate.</text>
</comment>
<comment type="similarity">
    <text evidence="1">Belongs to the SIS family. GmhA subfamily.</text>
</comment>
<organism>
    <name type="scientific">Shigella sonnei (strain Ss046)</name>
    <dbReference type="NCBI Taxonomy" id="300269"/>
    <lineage>
        <taxon>Bacteria</taxon>
        <taxon>Pseudomonadati</taxon>
        <taxon>Pseudomonadota</taxon>
        <taxon>Gammaproteobacteria</taxon>
        <taxon>Enterobacterales</taxon>
        <taxon>Enterobacteriaceae</taxon>
        <taxon>Shigella</taxon>
    </lineage>
</organism>
<sequence>MYQDLIRNELNEAAETLANFLKDDANIHAIQRAAVLLADSFKAGGKVLSCGNGGSHCDAMHFAEELTGRYRENRPGYPAIAISDVSHISCVGNDFGFNDIFSRYVEAVGREGDVLLGISTSGNSANVIKAIAAAREKGMKVITLTGKDGGKMAGTADIEIRVPHFGYADRIQEIHIKVIHILIQLIEKEMVK</sequence>
<dbReference type="EC" id="5.3.1.28" evidence="1"/>
<dbReference type="EMBL" id="CP000038">
    <property type="protein sequence ID" value="AAZ87048.1"/>
    <property type="molecule type" value="Genomic_DNA"/>
</dbReference>
<dbReference type="SMR" id="Q3Z5B4"/>
<dbReference type="KEGG" id="ssn:SSON_0264"/>
<dbReference type="HOGENOM" id="CLU_080999_4_0_6"/>
<dbReference type="UniPathway" id="UPA00041">
    <property type="reaction ID" value="UER00436"/>
</dbReference>
<dbReference type="Proteomes" id="UP000002529">
    <property type="component" value="Chromosome"/>
</dbReference>
<dbReference type="GO" id="GO:0005737">
    <property type="term" value="C:cytoplasm"/>
    <property type="evidence" value="ECO:0007669"/>
    <property type="project" value="UniProtKB-SubCell"/>
</dbReference>
<dbReference type="GO" id="GO:0097367">
    <property type="term" value="F:carbohydrate derivative binding"/>
    <property type="evidence" value="ECO:0007669"/>
    <property type="project" value="InterPro"/>
</dbReference>
<dbReference type="GO" id="GO:0008968">
    <property type="term" value="F:D-sedoheptulose 7-phosphate isomerase activity"/>
    <property type="evidence" value="ECO:0007669"/>
    <property type="project" value="UniProtKB-UniRule"/>
</dbReference>
<dbReference type="GO" id="GO:0008270">
    <property type="term" value="F:zinc ion binding"/>
    <property type="evidence" value="ECO:0007669"/>
    <property type="project" value="UniProtKB-UniRule"/>
</dbReference>
<dbReference type="GO" id="GO:0005975">
    <property type="term" value="P:carbohydrate metabolic process"/>
    <property type="evidence" value="ECO:0007669"/>
    <property type="project" value="UniProtKB-UniRule"/>
</dbReference>
<dbReference type="GO" id="GO:2001061">
    <property type="term" value="P:D-glycero-D-manno-heptose 7-phosphate biosynthetic process"/>
    <property type="evidence" value="ECO:0007669"/>
    <property type="project" value="UniProtKB-UniPathway"/>
</dbReference>
<dbReference type="CDD" id="cd05006">
    <property type="entry name" value="SIS_GmhA"/>
    <property type="match status" value="1"/>
</dbReference>
<dbReference type="FunFam" id="3.40.50.10490:FF:000013">
    <property type="entry name" value="Phosphoheptose isomerase"/>
    <property type="match status" value="1"/>
</dbReference>
<dbReference type="Gene3D" id="3.40.50.10490">
    <property type="entry name" value="Glucose-6-phosphate isomerase like protein, domain 1"/>
    <property type="match status" value="1"/>
</dbReference>
<dbReference type="HAMAP" id="MF_00067">
    <property type="entry name" value="GmhA"/>
    <property type="match status" value="1"/>
</dbReference>
<dbReference type="InterPro" id="IPR035461">
    <property type="entry name" value="GmhA/DiaA"/>
</dbReference>
<dbReference type="InterPro" id="IPR004515">
    <property type="entry name" value="Phosphoheptose_Isoase"/>
</dbReference>
<dbReference type="InterPro" id="IPR001347">
    <property type="entry name" value="SIS_dom"/>
</dbReference>
<dbReference type="InterPro" id="IPR046348">
    <property type="entry name" value="SIS_dom_sf"/>
</dbReference>
<dbReference type="InterPro" id="IPR050099">
    <property type="entry name" value="SIS_GmhA/DiaA_subfam"/>
</dbReference>
<dbReference type="NCBIfam" id="TIGR00441">
    <property type="entry name" value="gmhA"/>
    <property type="match status" value="1"/>
</dbReference>
<dbReference type="NCBIfam" id="NF001628">
    <property type="entry name" value="PRK00414.1"/>
    <property type="match status" value="1"/>
</dbReference>
<dbReference type="PANTHER" id="PTHR30390:SF7">
    <property type="entry name" value="PHOSPHOHEPTOSE ISOMERASE"/>
    <property type="match status" value="1"/>
</dbReference>
<dbReference type="PANTHER" id="PTHR30390">
    <property type="entry name" value="SEDOHEPTULOSE 7-PHOSPHATE ISOMERASE / DNAA INITIATOR-ASSOCIATING FACTOR FOR REPLICATION INITIATION"/>
    <property type="match status" value="1"/>
</dbReference>
<dbReference type="Pfam" id="PF13580">
    <property type="entry name" value="SIS_2"/>
    <property type="match status" value="1"/>
</dbReference>
<dbReference type="SUPFAM" id="SSF53697">
    <property type="entry name" value="SIS domain"/>
    <property type="match status" value="1"/>
</dbReference>
<dbReference type="PROSITE" id="PS51464">
    <property type="entry name" value="SIS"/>
    <property type="match status" value="1"/>
</dbReference>
<feature type="chain" id="PRO_1000009098" description="Phosphoheptose isomerase">
    <location>
        <begin position="1"/>
        <end position="192"/>
    </location>
</feature>
<feature type="domain" description="SIS" evidence="1">
    <location>
        <begin position="37"/>
        <end position="192"/>
    </location>
</feature>
<feature type="binding site" evidence="1">
    <location>
        <begin position="52"/>
        <end position="54"/>
    </location>
    <ligand>
        <name>substrate</name>
    </ligand>
</feature>
<feature type="binding site" evidence="1">
    <location>
        <position position="61"/>
    </location>
    <ligand>
        <name>Zn(2+)</name>
        <dbReference type="ChEBI" id="CHEBI:29105"/>
    </ligand>
</feature>
<feature type="binding site" evidence="1">
    <location>
        <position position="65"/>
    </location>
    <ligand>
        <name>substrate</name>
    </ligand>
</feature>
<feature type="binding site" evidence="1">
    <location>
        <position position="65"/>
    </location>
    <ligand>
        <name>Zn(2+)</name>
        <dbReference type="ChEBI" id="CHEBI:29105"/>
    </ligand>
</feature>
<feature type="binding site" evidence="1">
    <location>
        <begin position="93"/>
        <end position="94"/>
    </location>
    <ligand>
        <name>substrate</name>
    </ligand>
</feature>
<feature type="binding site" evidence="1">
    <location>
        <begin position="119"/>
        <end position="121"/>
    </location>
    <ligand>
        <name>substrate</name>
    </ligand>
</feature>
<feature type="binding site" evidence="1">
    <location>
        <position position="124"/>
    </location>
    <ligand>
        <name>substrate</name>
    </ligand>
</feature>
<feature type="binding site" evidence="1">
    <location>
        <position position="172"/>
    </location>
    <ligand>
        <name>substrate</name>
    </ligand>
</feature>
<feature type="binding site" evidence="1">
    <location>
        <position position="172"/>
    </location>
    <ligand>
        <name>Zn(2+)</name>
        <dbReference type="ChEBI" id="CHEBI:29105"/>
    </ligand>
</feature>
<feature type="binding site" evidence="1">
    <location>
        <position position="180"/>
    </location>
    <ligand>
        <name>Zn(2+)</name>
        <dbReference type="ChEBI" id="CHEBI:29105"/>
    </ligand>
</feature>
<keyword id="KW-0119">Carbohydrate metabolism</keyword>
<keyword id="KW-0963">Cytoplasm</keyword>
<keyword id="KW-0413">Isomerase</keyword>
<keyword id="KW-0479">Metal-binding</keyword>
<keyword id="KW-1185">Reference proteome</keyword>
<keyword id="KW-0862">Zinc</keyword>
<protein>
    <recommendedName>
        <fullName evidence="1">Phosphoheptose isomerase</fullName>
        <ecNumber evidence="1">5.3.1.28</ecNumber>
    </recommendedName>
    <alternativeName>
        <fullName evidence="1">Sedoheptulose 7-phosphate isomerase</fullName>
    </alternativeName>
</protein>
<name>GMHA_SHISS</name>
<proteinExistence type="inferred from homology"/>
<accession>Q3Z5B4</accession>